<organism>
    <name type="scientific">Burkholderia orbicola (strain AU 1054)</name>
    <dbReference type="NCBI Taxonomy" id="331271"/>
    <lineage>
        <taxon>Bacteria</taxon>
        <taxon>Pseudomonadati</taxon>
        <taxon>Pseudomonadota</taxon>
        <taxon>Betaproteobacteria</taxon>
        <taxon>Burkholderiales</taxon>
        <taxon>Burkholderiaceae</taxon>
        <taxon>Burkholderia</taxon>
        <taxon>Burkholderia cepacia complex</taxon>
        <taxon>Burkholderia orbicola</taxon>
    </lineage>
</organism>
<gene>
    <name type="ordered locus">Bcen_5920</name>
</gene>
<comment type="function">
    <text evidence="1">Could be a mediator in iron transactions between iron acquisition and iron-requiring processes, such as synthesis and/or repair of Fe-S clusters in biosynthetic enzymes.</text>
</comment>
<comment type="similarity">
    <text evidence="1">Belongs to the Fe(2+)-trafficking protein family.</text>
</comment>
<keyword id="KW-0408">Iron</keyword>
<reference key="1">
    <citation type="submission" date="2006-05" db="EMBL/GenBank/DDBJ databases">
        <title>Complete sequence of chromosome 3 of Burkholderia cenocepacia AU 1054.</title>
        <authorList>
            <consortium name="US DOE Joint Genome Institute"/>
            <person name="Copeland A."/>
            <person name="Lucas S."/>
            <person name="Lapidus A."/>
            <person name="Barry K."/>
            <person name="Detter J.C."/>
            <person name="Glavina del Rio T."/>
            <person name="Hammon N."/>
            <person name="Israni S."/>
            <person name="Dalin E."/>
            <person name="Tice H."/>
            <person name="Pitluck S."/>
            <person name="Chain P."/>
            <person name="Malfatti S."/>
            <person name="Shin M."/>
            <person name="Vergez L."/>
            <person name="Schmutz J."/>
            <person name="Larimer F."/>
            <person name="Land M."/>
            <person name="Hauser L."/>
            <person name="Kyrpides N."/>
            <person name="Lykidis A."/>
            <person name="LiPuma J.J."/>
            <person name="Konstantinidis K."/>
            <person name="Tiedje J.M."/>
            <person name="Richardson P."/>
        </authorList>
    </citation>
    <scope>NUCLEOTIDE SEQUENCE [LARGE SCALE GENOMIC DNA]</scope>
    <source>
        <strain>AU 1054</strain>
    </source>
</reference>
<protein>
    <recommendedName>
        <fullName evidence="1">Probable Fe(2+)-trafficking protein</fullName>
    </recommendedName>
</protein>
<dbReference type="EMBL" id="CP000380">
    <property type="protein sequence ID" value="ABF80785.1"/>
    <property type="molecule type" value="Genomic_DNA"/>
</dbReference>
<dbReference type="SMR" id="Q1BHX0"/>
<dbReference type="HOGENOM" id="CLU_170994_0_0_4"/>
<dbReference type="GO" id="GO:0005829">
    <property type="term" value="C:cytosol"/>
    <property type="evidence" value="ECO:0007669"/>
    <property type="project" value="TreeGrafter"/>
</dbReference>
<dbReference type="GO" id="GO:0005506">
    <property type="term" value="F:iron ion binding"/>
    <property type="evidence" value="ECO:0007669"/>
    <property type="project" value="UniProtKB-UniRule"/>
</dbReference>
<dbReference type="GO" id="GO:0034599">
    <property type="term" value="P:cellular response to oxidative stress"/>
    <property type="evidence" value="ECO:0007669"/>
    <property type="project" value="TreeGrafter"/>
</dbReference>
<dbReference type="FunFam" id="1.10.3880.10:FF:000001">
    <property type="entry name" value="Probable Fe(2+)-trafficking protein"/>
    <property type="match status" value="1"/>
</dbReference>
<dbReference type="Gene3D" id="1.10.3880.10">
    <property type="entry name" value="Fe(II) trafficking protein YggX"/>
    <property type="match status" value="1"/>
</dbReference>
<dbReference type="HAMAP" id="MF_00686">
    <property type="entry name" value="Fe_traffic_YggX"/>
    <property type="match status" value="1"/>
</dbReference>
<dbReference type="InterPro" id="IPR007457">
    <property type="entry name" value="Fe_traffick_prot_YggX"/>
</dbReference>
<dbReference type="InterPro" id="IPR036766">
    <property type="entry name" value="Fe_traffick_prot_YggX_sf"/>
</dbReference>
<dbReference type="NCBIfam" id="NF003817">
    <property type="entry name" value="PRK05408.1"/>
    <property type="match status" value="1"/>
</dbReference>
<dbReference type="PANTHER" id="PTHR36965">
    <property type="entry name" value="FE(2+)-TRAFFICKING PROTEIN-RELATED"/>
    <property type="match status" value="1"/>
</dbReference>
<dbReference type="PANTHER" id="PTHR36965:SF1">
    <property type="entry name" value="FE(2+)-TRAFFICKING PROTEIN-RELATED"/>
    <property type="match status" value="1"/>
</dbReference>
<dbReference type="Pfam" id="PF04362">
    <property type="entry name" value="Iron_traffic"/>
    <property type="match status" value="1"/>
</dbReference>
<dbReference type="PIRSF" id="PIRSF029827">
    <property type="entry name" value="Fe_traffic_YggX"/>
    <property type="match status" value="1"/>
</dbReference>
<dbReference type="SUPFAM" id="SSF111148">
    <property type="entry name" value="YggX-like"/>
    <property type="match status" value="1"/>
</dbReference>
<sequence length="91" mass="10327">MARMIQCAKLGKEAEGLDFPPLPGELGKRIYESVSKEAWQGWLKQQTMLINENRLNMADPRARQYLMKQTEKYFFGDGADQASGYVPPTEG</sequence>
<accession>Q1BHX0</accession>
<name>FETP_BURO1</name>
<proteinExistence type="inferred from homology"/>
<feature type="chain" id="PRO_1000045019" description="Probable Fe(2+)-trafficking protein">
    <location>
        <begin position="1"/>
        <end position="91"/>
    </location>
</feature>
<evidence type="ECO:0000255" key="1">
    <source>
        <dbReference type="HAMAP-Rule" id="MF_00686"/>
    </source>
</evidence>